<comment type="function">
    <text evidence="1">Can catalyze the hydrolysis of ATP in the presence of single-stranded DNA, the ATP-dependent uptake of single-stranded DNA by duplex DNA, and the ATP-dependent hybridization of homologous single-stranded DNAs. It interacts with LexA causing its activation and leading to its autocatalytic cleavage.</text>
</comment>
<comment type="subcellular location">
    <subcellularLocation>
        <location evidence="1">Cytoplasm</location>
    </subcellularLocation>
</comment>
<comment type="similarity">
    <text evidence="1">Belongs to the RecA family.</text>
</comment>
<name>RECA_BURPS</name>
<protein>
    <recommendedName>
        <fullName evidence="1">Protein RecA</fullName>
    </recommendedName>
    <alternativeName>
        <fullName evidence="1">Recombinase A</fullName>
    </alternativeName>
</protein>
<gene>
    <name evidence="1" type="primary">recA</name>
    <name type="ordered locus">BPSL0776</name>
</gene>
<dbReference type="EMBL" id="AY697975">
    <property type="protein sequence ID" value="AAU08168.1"/>
    <property type="molecule type" value="Genomic_DNA"/>
</dbReference>
<dbReference type="EMBL" id="BX571965">
    <property type="protein sequence ID" value="CAH34768.1"/>
    <property type="molecule type" value="Genomic_DNA"/>
</dbReference>
<dbReference type="RefSeq" id="WP_004189458.1">
    <property type="nucleotide sequence ID" value="NZ_CP009538.1"/>
</dbReference>
<dbReference type="RefSeq" id="YP_107401.1">
    <property type="nucleotide sequence ID" value="NC_006350.1"/>
</dbReference>
<dbReference type="SMR" id="Q66X92"/>
<dbReference type="STRING" id="272560.BPSL0776"/>
<dbReference type="GeneID" id="93059269"/>
<dbReference type="KEGG" id="bps:BPSL0776"/>
<dbReference type="PATRIC" id="fig|272560.51.peg.833"/>
<dbReference type="eggNOG" id="COG0468">
    <property type="taxonomic scope" value="Bacteria"/>
</dbReference>
<dbReference type="Proteomes" id="UP000000605">
    <property type="component" value="Chromosome 1"/>
</dbReference>
<dbReference type="GO" id="GO:0005829">
    <property type="term" value="C:cytosol"/>
    <property type="evidence" value="ECO:0007669"/>
    <property type="project" value="TreeGrafter"/>
</dbReference>
<dbReference type="GO" id="GO:0005524">
    <property type="term" value="F:ATP binding"/>
    <property type="evidence" value="ECO:0007669"/>
    <property type="project" value="UniProtKB-UniRule"/>
</dbReference>
<dbReference type="GO" id="GO:0016887">
    <property type="term" value="F:ATP hydrolysis activity"/>
    <property type="evidence" value="ECO:0007669"/>
    <property type="project" value="InterPro"/>
</dbReference>
<dbReference type="GO" id="GO:0140664">
    <property type="term" value="F:ATP-dependent DNA damage sensor activity"/>
    <property type="evidence" value="ECO:0007669"/>
    <property type="project" value="InterPro"/>
</dbReference>
<dbReference type="GO" id="GO:0003684">
    <property type="term" value="F:damaged DNA binding"/>
    <property type="evidence" value="ECO:0007669"/>
    <property type="project" value="UniProtKB-UniRule"/>
</dbReference>
<dbReference type="GO" id="GO:0003697">
    <property type="term" value="F:single-stranded DNA binding"/>
    <property type="evidence" value="ECO:0007669"/>
    <property type="project" value="UniProtKB-UniRule"/>
</dbReference>
<dbReference type="GO" id="GO:0006310">
    <property type="term" value="P:DNA recombination"/>
    <property type="evidence" value="ECO:0007669"/>
    <property type="project" value="UniProtKB-UniRule"/>
</dbReference>
<dbReference type="GO" id="GO:0006281">
    <property type="term" value="P:DNA repair"/>
    <property type="evidence" value="ECO:0007669"/>
    <property type="project" value="UniProtKB-UniRule"/>
</dbReference>
<dbReference type="GO" id="GO:0009432">
    <property type="term" value="P:SOS response"/>
    <property type="evidence" value="ECO:0007669"/>
    <property type="project" value="UniProtKB-UniRule"/>
</dbReference>
<dbReference type="CDD" id="cd00983">
    <property type="entry name" value="RecA"/>
    <property type="match status" value="1"/>
</dbReference>
<dbReference type="FunFam" id="3.40.50.300:FF:000087">
    <property type="entry name" value="Recombinase RecA"/>
    <property type="match status" value="1"/>
</dbReference>
<dbReference type="Gene3D" id="3.40.50.300">
    <property type="entry name" value="P-loop containing nucleotide triphosphate hydrolases"/>
    <property type="match status" value="1"/>
</dbReference>
<dbReference type="HAMAP" id="MF_00268">
    <property type="entry name" value="RecA"/>
    <property type="match status" value="1"/>
</dbReference>
<dbReference type="InterPro" id="IPR003593">
    <property type="entry name" value="AAA+_ATPase"/>
</dbReference>
<dbReference type="InterPro" id="IPR013765">
    <property type="entry name" value="DNA_recomb/repair_RecA"/>
</dbReference>
<dbReference type="InterPro" id="IPR020584">
    <property type="entry name" value="DNA_recomb/repair_RecA_CS"/>
</dbReference>
<dbReference type="InterPro" id="IPR027417">
    <property type="entry name" value="P-loop_NTPase"/>
</dbReference>
<dbReference type="InterPro" id="IPR049261">
    <property type="entry name" value="RecA-like_C"/>
</dbReference>
<dbReference type="InterPro" id="IPR049428">
    <property type="entry name" value="RecA-like_N"/>
</dbReference>
<dbReference type="InterPro" id="IPR020588">
    <property type="entry name" value="RecA_ATP-bd"/>
</dbReference>
<dbReference type="InterPro" id="IPR023400">
    <property type="entry name" value="RecA_C_sf"/>
</dbReference>
<dbReference type="InterPro" id="IPR020587">
    <property type="entry name" value="RecA_monomer-monomer_interface"/>
</dbReference>
<dbReference type="NCBIfam" id="TIGR02012">
    <property type="entry name" value="tigrfam_recA"/>
    <property type="match status" value="1"/>
</dbReference>
<dbReference type="PANTHER" id="PTHR45900:SF1">
    <property type="entry name" value="MITOCHONDRIAL DNA REPAIR PROTEIN RECA HOMOLOG-RELATED"/>
    <property type="match status" value="1"/>
</dbReference>
<dbReference type="PANTHER" id="PTHR45900">
    <property type="entry name" value="RECA"/>
    <property type="match status" value="1"/>
</dbReference>
<dbReference type="Pfam" id="PF00154">
    <property type="entry name" value="RecA"/>
    <property type="match status" value="1"/>
</dbReference>
<dbReference type="Pfam" id="PF21096">
    <property type="entry name" value="RecA_C"/>
    <property type="match status" value="1"/>
</dbReference>
<dbReference type="PRINTS" id="PR00142">
    <property type="entry name" value="RECA"/>
</dbReference>
<dbReference type="SMART" id="SM00382">
    <property type="entry name" value="AAA"/>
    <property type="match status" value="1"/>
</dbReference>
<dbReference type="SUPFAM" id="SSF52540">
    <property type="entry name" value="P-loop containing nucleoside triphosphate hydrolases"/>
    <property type="match status" value="1"/>
</dbReference>
<dbReference type="SUPFAM" id="SSF54752">
    <property type="entry name" value="RecA protein, C-terminal domain"/>
    <property type="match status" value="1"/>
</dbReference>
<dbReference type="PROSITE" id="PS00321">
    <property type="entry name" value="RECA_1"/>
    <property type="match status" value="1"/>
</dbReference>
<dbReference type="PROSITE" id="PS50162">
    <property type="entry name" value="RECA_2"/>
    <property type="match status" value="1"/>
</dbReference>
<dbReference type="PROSITE" id="PS50163">
    <property type="entry name" value="RECA_3"/>
    <property type="match status" value="1"/>
</dbReference>
<feature type="chain" id="PRO_0000122675" description="Protein RecA">
    <location>
        <begin position="1"/>
        <end position="356"/>
    </location>
</feature>
<feature type="binding site" evidence="1">
    <location>
        <begin position="75"/>
        <end position="82"/>
    </location>
    <ligand>
        <name>ATP</name>
        <dbReference type="ChEBI" id="CHEBI:30616"/>
    </ligand>
</feature>
<keyword id="KW-0067">ATP-binding</keyword>
<keyword id="KW-0963">Cytoplasm</keyword>
<keyword id="KW-0227">DNA damage</keyword>
<keyword id="KW-0233">DNA recombination</keyword>
<keyword id="KW-0234">DNA repair</keyword>
<keyword id="KW-0238">DNA-binding</keyword>
<keyword id="KW-0547">Nucleotide-binding</keyword>
<keyword id="KW-1185">Reference proteome</keyword>
<keyword id="KW-0742">SOS response</keyword>
<organism>
    <name type="scientific">Burkholderia pseudomallei (strain K96243)</name>
    <dbReference type="NCBI Taxonomy" id="272560"/>
    <lineage>
        <taxon>Bacteria</taxon>
        <taxon>Pseudomonadati</taxon>
        <taxon>Pseudomonadota</taxon>
        <taxon>Betaproteobacteria</taxon>
        <taxon>Burkholderiales</taxon>
        <taxon>Burkholderiaceae</taxon>
        <taxon>Burkholderia</taxon>
        <taxon>pseudomallei group</taxon>
    </lineage>
</organism>
<sequence length="356" mass="38173">MEESKKGSGLTAEKSKALAAALAQIEKQFGKGSIMRLGDGEAVEDIQVVSTGSLGLDIALGVGGLPRGRVVEIYGPESSGKTTLTLQVIAEMQKLGGTAAFIDAEHALDVQYASKLGVNVPELLISQPDTGEQALEIVDALVRSGSIDMIVIDSVAALVPKAEIEGEMGDALPGLQARLMSQALRKLTGTIKRTNCLVIFINQIRMKIGVMFGNPETTTGGNALKFYSSVRLDIRRIGSIKKNDEVIGNETRVKVVKNKVSPPFREAIFDILYGEGISRQGEIIDLGVQAKIVDKAGAWYSYSGEKIGQGKDNAREFLRENPEIAREIENRIRESLGVAAMPQGAGSEAEIMDEEE</sequence>
<proteinExistence type="inferred from homology"/>
<accession>Q66X92</accession>
<accession>Q63WW5</accession>
<reference key="1">
    <citation type="submission" date="2004-07" db="EMBL/GenBank/DDBJ databases">
        <title>recA-based PCR-RFLP typing of Burkholderia pseudomallei.</title>
        <authorList>
            <person name="Kiratisin P."/>
        </authorList>
    </citation>
    <scope>NUCLEOTIDE SEQUENCE [GENOMIC DNA]</scope>
    <source>
        <strain>K96243</strain>
    </source>
</reference>
<reference key="2">
    <citation type="journal article" date="2004" name="Proc. Natl. Acad. Sci. U.S.A.">
        <title>Genomic plasticity of the causative agent of melioidosis, Burkholderia pseudomallei.</title>
        <authorList>
            <person name="Holden M.T.G."/>
            <person name="Titball R.W."/>
            <person name="Peacock S.J."/>
            <person name="Cerdeno-Tarraga A.-M."/>
            <person name="Atkins T."/>
            <person name="Crossman L.C."/>
            <person name="Pitt T."/>
            <person name="Churcher C."/>
            <person name="Mungall K.L."/>
            <person name="Bentley S.D."/>
            <person name="Sebaihia M."/>
            <person name="Thomson N.R."/>
            <person name="Bason N."/>
            <person name="Beacham I.R."/>
            <person name="Brooks K."/>
            <person name="Brown K.A."/>
            <person name="Brown N.F."/>
            <person name="Challis G.L."/>
            <person name="Cherevach I."/>
            <person name="Chillingworth T."/>
            <person name="Cronin A."/>
            <person name="Crossett B."/>
            <person name="Davis P."/>
            <person name="DeShazer D."/>
            <person name="Feltwell T."/>
            <person name="Fraser A."/>
            <person name="Hance Z."/>
            <person name="Hauser H."/>
            <person name="Holroyd S."/>
            <person name="Jagels K."/>
            <person name="Keith K.E."/>
            <person name="Maddison M."/>
            <person name="Moule S."/>
            <person name="Price C."/>
            <person name="Quail M.A."/>
            <person name="Rabbinowitsch E."/>
            <person name="Rutherford K."/>
            <person name="Sanders M."/>
            <person name="Simmonds M."/>
            <person name="Songsivilai S."/>
            <person name="Stevens K."/>
            <person name="Tumapa S."/>
            <person name="Vesaratchavest M."/>
            <person name="Whitehead S."/>
            <person name="Yeats C."/>
            <person name="Barrell B.G."/>
            <person name="Oyston P.C.F."/>
            <person name="Parkhill J."/>
        </authorList>
    </citation>
    <scope>NUCLEOTIDE SEQUENCE [LARGE SCALE GENOMIC DNA]</scope>
    <source>
        <strain>K96243</strain>
    </source>
</reference>
<evidence type="ECO:0000255" key="1">
    <source>
        <dbReference type="HAMAP-Rule" id="MF_00268"/>
    </source>
</evidence>